<dbReference type="EMBL" id="AABR07026379">
    <property type="status" value="NOT_ANNOTATED_CDS"/>
    <property type="molecule type" value="Genomic_DNA"/>
</dbReference>
<dbReference type="EMBL" id="CH473970">
    <property type="protein sequence ID" value="EDM08997.1"/>
    <property type="molecule type" value="Genomic_DNA"/>
</dbReference>
<dbReference type="RefSeq" id="XP_006253412.1">
    <property type="nucleotide sequence ID" value="XM_006253350.5"/>
</dbReference>
<dbReference type="RefSeq" id="XP_006253413.1">
    <property type="nucleotide sequence ID" value="XM_006253351.4"/>
</dbReference>
<dbReference type="RefSeq" id="XP_006253414.1">
    <property type="nucleotide sequence ID" value="XM_006253352.5"/>
</dbReference>
<dbReference type="RefSeq" id="XP_038950516.1">
    <property type="nucleotide sequence ID" value="XM_039094588.2"/>
</dbReference>
<dbReference type="SMR" id="A0A0G2K309"/>
<dbReference type="FunCoup" id="A0A0G2K309">
    <property type="interactions" value="389"/>
</dbReference>
<dbReference type="STRING" id="10116.ENSRNOP00000045952"/>
<dbReference type="iPTMnet" id="A0A0G2K309"/>
<dbReference type="PhosphoSitePlus" id="A0A0G2K309"/>
<dbReference type="Ensembl" id="ENSRNOT00000050637.6">
    <property type="protein sequence ID" value="ENSRNOP00000045952.4"/>
    <property type="gene ID" value="ENSRNOG00000011881.7"/>
</dbReference>
<dbReference type="GeneID" id="306574"/>
<dbReference type="AGR" id="RGD:1311488"/>
<dbReference type="CTD" id="10166"/>
<dbReference type="RGD" id="1311488">
    <property type="gene designation" value="Slc25a15"/>
</dbReference>
<dbReference type="InParanoid" id="A0A0G2K309"/>
<dbReference type="OrthoDB" id="409586at2759"/>
<dbReference type="Reactome" id="R-RNO-70635">
    <property type="pathway name" value="Urea cycle"/>
</dbReference>
<dbReference type="PRO" id="PR:A0A0G2K309"/>
<dbReference type="Proteomes" id="UP000002494">
    <property type="component" value="Chromosome 16"/>
</dbReference>
<dbReference type="Proteomes" id="UP000234681">
    <property type="component" value="Chromosome 16"/>
</dbReference>
<dbReference type="Bgee" id="ENSRNOG00000011881">
    <property type="expression patterns" value="Expressed in liver and 19 other cell types or tissues"/>
</dbReference>
<dbReference type="ExpressionAtlas" id="A0A0G2K309">
    <property type="expression patterns" value="baseline and differential"/>
</dbReference>
<dbReference type="GO" id="GO:0005743">
    <property type="term" value="C:mitochondrial inner membrane"/>
    <property type="evidence" value="ECO:0007669"/>
    <property type="project" value="UniProtKB-SubCell"/>
</dbReference>
<dbReference type="GO" id="GO:0005739">
    <property type="term" value="C:mitochondrion"/>
    <property type="evidence" value="ECO:0000250"/>
    <property type="project" value="UniProtKB"/>
</dbReference>
<dbReference type="GO" id="GO:0015297">
    <property type="term" value="F:antiporter activity"/>
    <property type="evidence" value="ECO:0000314"/>
    <property type="project" value="UniProtKB"/>
</dbReference>
<dbReference type="GO" id="GO:0061459">
    <property type="term" value="F:L-arginine transmembrane transporter activity"/>
    <property type="evidence" value="ECO:0000250"/>
    <property type="project" value="UniProtKB"/>
</dbReference>
<dbReference type="GO" id="GO:0015189">
    <property type="term" value="F:L-lysine transmembrane transporter activity"/>
    <property type="evidence" value="ECO:0000250"/>
    <property type="project" value="UniProtKB"/>
</dbReference>
<dbReference type="GO" id="GO:0000064">
    <property type="term" value="F:L-ornithine transmembrane transporter activity"/>
    <property type="evidence" value="ECO:0000314"/>
    <property type="project" value="UniProtKB"/>
</dbReference>
<dbReference type="GO" id="GO:1903826">
    <property type="term" value="P:L-arginine transmembrane transport"/>
    <property type="evidence" value="ECO:0000250"/>
    <property type="project" value="UniProtKB"/>
</dbReference>
<dbReference type="GO" id="GO:1903401">
    <property type="term" value="P:L-lysine transmembrane transport"/>
    <property type="evidence" value="ECO:0000250"/>
    <property type="project" value="UniProtKB"/>
</dbReference>
<dbReference type="GO" id="GO:1990575">
    <property type="term" value="P:mitochondrial L-ornithine transmembrane transport"/>
    <property type="evidence" value="ECO:0000318"/>
    <property type="project" value="GO_Central"/>
</dbReference>
<dbReference type="FunFam" id="1.50.40.10:FF:000055">
    <property type="entry name" value="mitochondrial ornithine transporter 1 isoform X1"/>
    <property type="match status" value="1"/>
</dbReference>
<dbReference type="Gene3D" id="1.50.40.10">
    <property type="entry name" value="Mitochondrial carrier domain"/>
    <property type="match status" value="1"/>
</dbReference>
<dbReference type="InterPro" id="IPR050567">
    <property type="entry name" value="Mitochondrial_Carrier"/>
</dbReference>
<dbReference type="InterPro" id="IPR018108">
    <property type="entry name" value="Mitochondrial_sb/sol_carrier"/>
</dbReference>
<dbReference type="InterPro" id="IPR023395">
    <property type="entry name" value="Mt_carrier_dom_sf"/>
</dbReference>
<dbReference type="PANTHER" id="PTHR45624">
    <property type="entry name" value="MITOCHONDRIAL BASIC AMINO ACIDS TRANSPORTER-RELATED"/>
    <property type="match status" value="1"/>
</dbReference>
<dbReference type="PANTHER" id="PTHR45624:SF22">
    <property type="entry name" value="MITOCHONDRIAL ORNITHINE TRANSPORTER 1"/>
    <property type="match status" value="1"/>
</dbReference>
<dbReference type="Pfam" id="PF00153">
    <property type="entry name" value="Mito_carr"/>
    <property type="match status" value="3"/>
</dbReference>
<dbReference type="SUPFAM" id="SSF103506">
    <property type="entry name" value="Mitochondrial carrier"/>
    <property type="match status" value="1"/>
</dbReference>
<dbReference type="PROSITE" id="PS50920">
    <property type="entry name" value="SOLCAR"/>
    <property type="match status" value="3"/>
</dbReference>
<gene>
    <name type="primary">Slc25a15</name>
</gene>
<reference key="1">
    <citation type="journal article" date="2004" name="Nature">
        <title>Genome sequence of the Brown Norway rat yields insights into mammalian evolution.</title>
        <authorList>
            <person name="Gibbs R.A."/>
            <person name="Weinstock G.M."/>
            <person name="Metzker M.L."/>
            <person name="Muzny D.M."/>
            <person name="Sodergren E.J."/>
            <person name="Scherer S."/>
            <person name="Scott G."/>
            <person name="Steffen D."/>
            <person name="Worley K.C."/>
            <person name="Burch P.E."/>
            <person name="Okwuonu G."/>
            <person name="Hines S."/>
            <person name="Lewis L."/>
            <person name="Deramo C."/>
            <person name="Delgado O."/>
            <person name="Dugan-Rocha S."/>
            <person name="Miner G."/>
            <person name="Morgan M."/>
            <person name="Hawes A."/>
            <person name="Gill R."/>
            <person name="Holt R.A."/>
            <person name="Adams M.D."/>
            <person name="Amanatides P.G."/>
            <person name="Baden-Tillson H."/>
            <person name="Barnstead M."/>
            <person name="Chin S."/>
            <person name="Evans C.A."/>
            <person name="Ferriera S."/>
            <person name="Fosler C."/>
            <person name="Glodek A."/>
            <person name="Gu Z."/>
            <person name="Jennings D."/>
            <person name="Kraft C.L."/>
            <person name="Nguyen T."/>
            <person name="Pfannkoch C.M."/>
            <person name="Sitter C."/>
            <person name="Sutton G.G."/>
            <person name="Venter J.C."/>
            <person name="Woodage T."/>
            <person name="Smith D."/>
            <person name="Lee H.-M."/>
            <person name="Gustafson E."/>
            <person name="Cahill P."/>
            <person name="Kana A."/>
            <person name="Doucette-Stamm L."/>
            <person name="Weinstock K."/>
            <person name="Fechtel K."/>
            <person name="Weiss R.B."/>
            <person name="Dunn D.M."/>
            <person name="Green E.D."/>
            <person name="Blakesley R.W."/>
            <person name="Bouffard G.G."/>
            <person name="De Jong P.J."/>
            <person name="Osoegawa K."/>
            <person name="Zhu B."/>
            <person name="Marra M."/>
            <person name="Schein J."/>
            <person name="Bosdet I."/>
            <person name="Fjell C."/>
            <person name="Jones S."/>
            <person name="Krzywinski M."/>
            <person name="Mathewson C."/>
            <person name="Siddiqui A."/>
            <person name="Wye N."/>
            <person name="McPherson J."/>
            <person name="Zhao S."/>
            <person name="Fraser C.M."/>
            <person name="Shetty J."/>
            <person name="Shatsman S."/>
            <person name="Geer K."/>
            <person name="Chen Y."/>
            <person name="Abramzon S."/>
            <person name="Nierman W.C."/>
            <person name="Havlak P.H."/>
            <person name="Chen R."/>
            <person name="Durbin K.J."/>
            <person name="Egan A."/>
            <person name="Ren Y."/>
            <person name="Song X.-Z."/>
            <person name="Li B."/>
            <person name="Liu Y."/>
            <person name="Qin X."/>
            <person name="Cawley S."/>
            <person name="Cooney A.J."/>
            <person name="D'Souza L.M."/>
            <person name="Martin K."/>
            <person name="Wu J.Q."/>
            <person name="Gonzalez-Garay M.L."/>
            <person name="Jackson A.R."/>
            <person name="Kalafus K.J."/>
            <person name="McLeod M.P."/>
            <person name="Milosavljevic A."/>
            <person name="Virk D."/>
            <person name="Volkov A."/>
            <person name="Wheeler D.A."/>
            <person name="Zhang Z."/>
            <person name="Bailey J.A."/>
            <person name="Eichler E.E."/>
            <person name="Tuzun E."/>
            <person name="Birney E."/>
            <person name="Mongin E."/>
            <person name="Ureta-Vidal A."/>
            <person name="Woodwark C."/>
            <person name="Zdobnov E."/>
            <person name="Bork P."/>
            <person name="Suyama M."/>
            <person name="Torrents D."/>
            <person name="Alexandersson M."/>
            <person name="Trask B.J."/>
            <person name="Young J.M."/>
            <person name="Huang H."/>
            <person name="Wang H."/>
            <person name="Xing H."/>
            <person name="Daniels S."/>
            <person name="Gietzen D."/>
            <person name="Schmidt J."/>
            <person name="Stevens K."/>
            <person name="Vitt U."/>
            <person name="Wingrove J."/>
            <person name="Camara F."/>
            <person name="Mar Alba M."/>
            <person name="Abril J.F."/>
            <person name="Guigo R."/>
            <person name="Smit A."/>
            <person name="Dubchak I."/>
            <person name="Rubin E.M."/>
            <person name="Couronne O."/>
            <person name="Poliakov A."/>
            <person name="Huebner N."/>
            <person name="Ganten D."/>
            <person name="Goesele C."/>
            <person name="Hummel O."/>
            <person name="Kreitler T."/>
            <person name="Lee Y.-A."/>
            <person name="Monti J."/>
            <person name="Schulz H."/>
            <person name="Zimdahl H."/>
            <person name="Himmelbauer H."/>
            <person name="Lehrach H."/>
            <person name="Jacob H.J."/>
            <person name="Bromberg S."/>
            <person name="Gullings-Handley J."/>
            <person name="Jensen-Seaman M.I."/>
            <person name="Kwitek A.E."/>
            <person name="Lazar J."/>
            <person name="Pasko D."/>
            <person name="Tonellato P.J."/>
            <person name="Twigger S."/>
            <person name="Ponting C.P."/>
            <person name="Duarte J.M."/>
            <person name="Rice S."/>
            <person name="Goodstadt L."/>
            <person name="Beatson S.A."/>
            <person name="Emes R.D."/>
            <person name="Winter E.E."/>
            <person name="Webber C."/>
            <person name="Brandt P."/>
            <person name="Nyakatura G."/>
            <person name="Adetobi M."/>
            <person name="Chiaromonte F."/>
            <person name="Elnitski L."/>
            <person name="Eswara P."/>
            <person name="Hardison R.C."/>
            <person name="Hou M."/>
            <person name="Kolbe D."/>
            <person name="Makova K."/>
            <person name="Miller W."/>
            <person name="Nekrutenko A."/>
            <person name="Riemer C."/>
            <person name="Schwartz S."/>
            <person name="Taylor J."/>
            <person name="Yang S."/>
            <person name="Zhang Y."/>
            <person name="Lindpaintner K."/>
            <person name="Andrews T.D."/>
            <person name="Caccamo M."/>
            <person name="Clamp M."/>
            <person name="Clarke L."/>
            <person name="Curwen V."/>
            <person name="Durbin R.M."/>
            <person name="Eyras E."/>
            <person name="Searle S.M."/>
            <person name="Cooper G.M."/>
            <person name="Batzoglou S."/>
            <person name="Brudno M."/>
            <person name="Sidow A."/>
            <person name="Stone E.A."/>
            <person name="Payseur B.A."/>
            <person name="Bourque G."/>
            <person name="Lopez-Otin C."/>
            <person name="Puente X.S."/>
            <person name="Chakrabarti K."/>
            <person name="Chatterji S."/>
            <person name="Dewey C."/>
            <person name="Pachter L."/>
            <person name="Bray N."/>
            <person name="Yap V.B."/>
            <person name="Caspi A."/>
            <person name="Tesler G."/>
            <person name="Pevzner P.A."/>
            <person name="Haussler D."/>
            <person name="Roskin K.M."/>
            <person name="Baertsch R."/>
            <person name="Clawson H."/>
            <person name="Furey T.S."/>
            <person name="Hinrichs A.S."/>
            <person name="Karolchik D."/>
            <person name="Kent W.J."/>
            <person name="Rosenbloom K.R."/>
            <person name="Trumbower H."/>
            <person name="Weirauch M."/>
            <person name="Cooper D.N."/>
            <person name="Stenson P.D."/>
            <person name="Ma B."/>
            <person name="Brent M."/>
            <person name="Arumugam M."/>
            <person name="Shteynberg D."/>
            <person name="Copley R.R."/>
            <person name="Taylor M.S."/>
            <person name="Riethman H."/>
            <person name="Mudunuri U."/>
            <person name="Peterson J."/>
            <person name="Guyer M."/>
            <person name="Felsenfeld A."/>
            <person name="Old S."/>
            <person name="Mockrin S."/>
            <person name="Collins F.S."/>
        </authorList>
    </citation>
    <scope>NUCLEOTIDE SEQUENCE [LARGE SCALE GENOMIC DNA]</scope>
    <source>
        <strain>Brown Norway</strain>
    </source>
</reference>
<reference key="2">
    <citation type="submission" date="2005-09" db="EMBL/GenBank/DDBJ databases">
        <authorList>
            <person name="Mural R.J."/>
            <person name="Li P.W."/>
            <person name="Adams M.D."/>
            <person name="Amanatides P.G."/>
            <person name="Baden-Tillson H."/>
            <person name="Barnstead M."/>
            <person name="Chin S.H."/>
            <person name="Dew I."/>
            <person name="Evans C.A."/>
            <person name="Ferriera S."/>
            <person name="Flanigan M."/>
            <person name="Fosler C."/>
            <person name="Glodek A."/>
            <person name="Gu Z."/>
            <person name="Holt R.A."/>
            <person name="Jennings D."/>
            <person name="Kraft C.L."/>
            <person name="Lu F."/>
            <person name="Nguyen T."/>
            <person name="Nusskern D.R."/>
            <person name="Pfannkoch C.M."/>
            <person name="Sitter C."/>
            <person name="Sutton G.G."/>
            <person name="Venter J.C."/>
            <person name="Wang Z."/>
            <person name="Woodage T."/>
            <person name="Zheng X.H."/>
            <person name="Zhong F."/>
        </authorList>
    </citation>
    <scope>NUCLEOTIDE SEQUENCE [LARGE SCALE GENOMIC DNA]</scope>
    <source>
        <strain>Brown Norway</strain>
    </source>
</reference>
<reference key="3">
    <citation type="journal article" date="1997" name="Biochem. J.">
        <title>The purified and reconstituted ornithine/citrulline carrier from rat liver mitochondria: electrical nature and coupling of the exchange reaction with H+ translocation.</title>
        <authorList>
            <person name="Indiveri C."/>
            <person name="Tonazzi A."/>
            <person name="Stipani I."/>
            <person name="Palmieri F."/>
        </authorList>
    </citation>
    <scope>FUNCTION</scope>
    <scope>TRANSPOTER ACTIVITY</scope>
    <scope>SUBCELLULAR LOCATION</scope>
    <scope>TISSUE SPECIFICITY</scope>
</reference>
<reference key="4">
    <citation type="journal article" date="1999" name="Biochem. J.">
        <title>The purified and reconstituted ornithine/citrulline carrier from rat liver mitochondria catalyses a second transport mode: ornithine+/H+ exchange.</title>
        <authorList>
            <person name="Indiveri C."/>
            <person name="Tonazzi A."/>
            <person name="Stipani I."/>
            <person name="Palmieri F."/>
        </authorList>
    </citation>
    <scope>FUNCTION</scope>
    <scope>TRANSPOTER ACTIVITY</scope>
    <scope>SUBCELLULAR LOCATION</scope>
</reference>
<organism>
    <name type="scientific">Rattus norvegicus</name>
    <name type="common">Rat</name>
    <dbReference type="NCBI Taxonomy" id="10116"/>
    <lineage>
        <taxon>Eukaryota</taxon>
        <taxon>Metazoa</taxon>
        <taxon>Chordata</taxon>
        <taxon>Craniata</taxon>
        <taxon>Vertebrata</taxon>
        <taxon>Euteleostomi</taxon>
        <taxon>Mammalia</taxon>
        <taxon>Eutheria</taxon>
        <taxon>Euarchontoglires</taxon>
        <taxon>Glires</taxon>
        <taxon>Rodentia</taxon>
        <taxon>Myomorpha</taxon>
        <taxon>Muroidea</taxon>
        <taxon>Muridae</taxon>
        <taxon>Murinae</taxon>
        <taxon>Rattus</taxon>
    </lineage>
</organism>
<accession>A0A0G2K309</accession>
<evidence type="ECO:0000250" key="1">
    <source>
        <dbReference type="UniProtKB" id="Q12375"/>
    </source>
</evidence>
<evidence type="ECO:0000250" key="2">
    <source>
        <dbReference type="UniProtKB" id="Q9Y619"/>
    </source>
</evidence>
<evidence type="ECO:0000255" key="3"/>
<evidence type="ECO:0000255" key="4">
    <source>
        <dbReference type="PROSITE-ProRule" id="PRU00282"/>
    </source>
</evidence>
<evidence type="ECO:0000269" key="5">
    <source>
    </source>
</evidence>
<evidence type="ECO:0000269" key="6">
    <source>
    </source>
</evidence>
<evidence type="ECO:0000269" key="7">
    <source>
    </source>
</evidence>
<evidence type="ECO:0000305" key="8"/>
<name>ORNT1_RAT</name>
<comment type="function">
    <text evidence="2 5 7">Mitochondrial ornithine-citrulline antiporter. Catalyzes the exchange between cytosolic ornithine and mitochondrial citrulline plus an H(+), the proton compensates the positive charge of ornithine thus leading to an electroneutral transport. Plays a crucial role in the urea cycle, by connecting the cytosolic and the intramitochondrial reactions of the urea cycle (PubMed:10417335, PubMed:9359400). Lysine and arginine are also transported by the antiport mechanism (By similarity). In addition, catalyzes an electroneutral exchange of ornithine or lysine for H(+), a reaction driven by the pH gradient across the inner membrane (PubMed:10417335).</text>
</comment>
<comment type="catalytic activity">
    <reaction evidence="5 7">
        <text>L-citrulline(in) + L-ornithine(out) + H(+)(in) = L-citrulline(out) + L-ornithine(in) + H(+)(out)</text>
        <dbReference type="Rhea" id="RHEA:70787"/>
        <dbReference type="ChEBI" id="CHEBI:15378"/>
        <dbReference type="ChEBI" id="CHEBI:46911"/>
        <dbReference type="ChEBI" id="CHEBI:57743"/>
    </reaction>
</comment>
<comment type="catalytic activity">
    <reaction evidence="2">
        <text>L-ornithine(in) + L-arginine(out) = L-ornithine(out) + L-arginine(in)</text>
        <dbReference type="Rhea" id="RHEA:34991"/>
        <dbReference type="ChEBI" id="CHEBI:32682"/>
        <dbReference type="ChEBI" id="CHEBI:46911"/>
    </reaction>
</comment>
<comment type="catalytic activity">
    <reaction evidence="2">
        <text>L-ornithine(out) + L-lysine(in) = L-ornithine(in) + L-lysine(out)</text>
        <dbReference type="Rhea" id="RHEA:70799"/>
        <dbReference type="ChEBI" id="CHEBI:32551"/>
        <dbReference type="ChEBI" id="CHEBI:46911"/>
    </reaction>
</comment>
<comment type="catalytic activity">
    <reaction evidence="5">
        <text>L-ornithine(out) + H(+)(in) = L-ornithine(in) + H(+)(out)</text>
        <dbReference type="Rhea" id="RHEA:70791"/>
        <dbReference type="ChEBI" id="CHEBI:15378"/>
        <dbReference type="ChEBI" id="CHEBI:46911"/>
    </reaction>
</comment>
<comment type="catalytic activity">
    <reaction evidence="5">
        <text>L-lysine(out) + H(+)(in) = L-lysine(in) + H(+)(out)</text>
        <dbReference type="Rhea" id="RHEA:70795"/>
        <dbReference type="ChEBI" id="CHEBI:15378"/>
        <dbReference type="ChEBI" id="CHEBI:32551"/>
    </reaction>
</comment>
<comment type="activity regulation">
    <text evidence="2">Inhibited by pyridoxal 5'-phosphate as well as by mercurials (mersalyl, p-chloromercuribenzene sulfonate, and mercuric chloride), N-ethylmaleimide and spermine.</text>
</comment>
<comment type="subcellular location">
    <subcellularLocation>
        <location evidence="1">Mitochondrion inner membrane</location>
        <topology evidence="3">Multi-pass membrane protein</topology>
    </subcellularLocation>
    <subcellularLocation>
        <location evidence="6">Mitochondrion membrane</location>
        <topology evidence="3">Multi-pass membrane protein</topology>
    </subcellularLocation>
</comment>
<comment type="tissue specificity">
    <text evidence="7">Expressed in the liver (at protein level).</text>
</comment>
<comment type="similarity">
    <text evidence="8">Belongs to the mitochondrial carrier (TC 2.A.29) family.</text>
</comment>
<sequence>MKSNPAIQAAIDLTAGAAGGTACVLTGQPFDTMKVKMQTFPDLYRGLTDCCLRTYSQVGFRGFYKGTSPALIANIAENSVLFMCYGFCQQVVRKVVGLDRQAKLSDLQNAAAGSFASAFAALVLCPTELVKCRLQTMYEMETSGKIAASQNTVWSVVKEIFRKDGPLGFYHGLSSTLLREVPGYFFFFGGYELSRSFFASGRSKDELGPIPLMLSGGFGGICLWLAVYPVDCIKSRIQVLSMTGKQTGLIRTFLSIVKNEGITALYSGLKPTMIRAFPANGALFLAYEYSRKLMMSQLEAC</sequence>
<protein>
    <recommendedName>
        <fullName>Mitochondrial ornithine transporter 1</fullName>
    </recommendedName>
    <alternativeName>
        <fullName>Solute carrier family 25 member 15</fullName>
    </alternativeName>
</protein>
<keyword id="KW-0050">Antiport</keyword>
<keyword id="KW-0472">Membrane</keyword>
<keyword id="KW-0496">Mitochondrion</keyword>
<keyword id="KW-0999">Mitochondrion inner membrane</keyword>
<keyword id="KW-1185">Reference proteome</keyword>
<keyword id="KW-0677">Repeat</keyword>
<keyword id="KW-0812">Transmembrane</keyword>
<keyword id="KW-1133">Transmembrane helix</keyword>
<keyword id="KW-0813">Transport</keyword>
<feature type="chain" id="PRO_0000443821" description="Mitochondrial ornithine transporter 1">
    <location>
        <begin position="1"/>
        <end position="301"/>
    </location>
</feature>
<feature type="transmembrane region" description="Helical; Name=1" evidence="3">
    <location>
        <begin position="5"/>
        <end position="25"/>
    </location>
</feature>
<feature type="transmembrane region" description="Helical; Name=2" evidence="3">
    <location>
        <begin position="68"/>
        <end position="88"/>
    </location>
</feature>
<feature type="transmembrane region" description="Helical; Name=3" evidence="3">
    <location>
        <begin position="110"/>
        <end position="130"/>
    </location>
</feature>
<feature type="transmembrane region" description="Helical; Name=4" evidence="3">
    <location>
        <begin position="168"/>
        <end position="188"/>
    </location>
</feature>
<feature type="transmembrane region" description="Helical; Name=5" evidence="3">
    <location>
        <begin position="207"/>
        <end position="227"/>
    </location>
</feature>
<feature type="transmembrane region" description="Helical; Name=6" evidence="3">
    <location>
        <begin position="237"/>
        <end position="257"/>
    </location>
</feature>
<feature type="repeat" description="Solcar" evidence="4">
    <location>
        <begin position="7"/>
        <end position="91"/>
    </location>
</feature>
<feature type="repeat" description="Solcar" evidence="4">
    <location>
        <begin position="104"/>
        <end position="197"/>
    </location>
</feature>
<feature type="repeat" description="Solcar" evidence="4">
    <location>
        <begin position="207"/>
        <end position="293"/>
    </location>
</feature>
<proteinExistence type="evidence at protein level"/>